<accession>Q7NTN5</accession>
<evidence type="ECO:0000255" key="1">
    <source>
        <dbReference type="HAMAP-Rule" id="MF_01661"/>
    </source>
</evidence>
<feature type="chain" id="PRO_0000346182" description="D-ribose pyranase">
    <location>
        <begin position="1"/>
        <end position="132"/>
    </location>
</feature>
<feature type="active site" description="Proton donor" evidence="1">
    <location>
        <position position="20"/>
    </location>
</feature>
<feature type="binding site" evidence="1">
    <location>
        <position position="28"/>
    </location>
    <ligand>
        <name>substrate</name>
    </ligand>
</feature>
<feature type="binding site" evidence="1">
    <location>
        <position position="99"/>
    </location>
    <ligand>
        <name>substrate</name>
    </ligand>
</feature>
<feature type="binding site" evidence="1">
    <location>
        <begin position="121"/>
        <end position="123"/>
    </location>
    <ligand>
        <name>substrate</name>
    </ligand>
</feature>
<gene>
    <name evidence="1" type="primary">rbsD</name>
    <name type="ordered locus">CV_3019</name>
</gene>
<reference key="1">
    <citation type="journal article" date="2003" name="Proc. Natl. Acad. Sci. U.S.A.">
        <title>The complete genome sequence of Chromobacterium violaceum reveals remarkable and exploitable bacterial adaptability.</title>
        <authorList>
            <person name="Vasconcelos A.T.R."/>
            <person name="de Almeida D.F."/>
            <person name="Hungria M."/>
            <person name="Guimaraes C.T."/>
            <person name="Antonio R.V."/>
            <person name="Almeida F.C."/>
            <person name="de Almeida L.G.P."/>
            <person name="de Almeida R."/>
            <person name="Alves-Gomes J.A."/>
            <person name="Andrade E.M."/>
            <person name="Araripe J."/>
            <person name="de Araujo M.F.F."/>
            <person name="Astolfi-Filho S."/>
            <person name="Azevedo V."/>
            <person name="Baptista A.J."/>
            <person name="Bataus L.A.M."/>
            <person name="Batista J.S."/>
            <person name="Belo A."/>
            <person name="van den Berg C."/>
            <person name="Bogo M."/>
            <person name="Bonatto S."/>
            <person name="Bordignon J."/>
            <person name="Brigido M.M."/>
            <person name="Brito C.A."/>
            <person name="Brocchi M."/>
            <person name="Burity H.A."/>
            <person name="Camargo A.A."/>
            <person name="Cardoso D.D.P."/>
            <person name="Carneiro N.P."/>
            <person name="Carraro D.M."/>
            <person name="Carvalho C.M.B."/>
            <person name="Cascardo J.C.M."/>
            <person name="Cavada B.S."/>
            <person name="Chueire L.M.O."/>
            <person name="Creczynski-Pasa T.B."/>
            <person name="Cunha-Junior N.C."/>
            <person name="Fagundes N."/>
            <person name="Falcao C.L."/>
            <person name="Fantinatti F."/>
            <person name="Farias I.P."/>
            <person name="Felipe M.S.S."/>
            <person name="Ferrari L.P."/>
            <person name="Ferro J.A."/>
            <person name="Ferro M.I.T."/>
            <person name="Franco G.R."/>
            <person name="Freitas N.S.A."/>
            <person name="Furlan L.R."/>
            <person name="Gazzinelli R.T."/>
            <person name="Gomes E.A."/>
            <person name="Goncalves P.R."/>
            <person name="Grangeiro T.B."/>
            <person name="Grattapaglia D."/>
            <person name="Grisard E.C."/>
            <person name="Hanna E.S."/>
            <person name="Jardim S.N."/>
            <person name="Laurino J."/>
            <person name="Leoi L.C.T."/>
            <person name="Lima L.F.A."/>
            <person name="Loureiro M.F."/>
            <person name="Lyra M.C.C.P."/>
            <person name="Madeira H.M.F."/>
            <person name="Manfio G.P."/>
            <person name="Maranhao A.Q."/>
            <person name="Martins W.S."/>
            <person name="di Mauro S.M.Z."/>
            <person name="de Medeiros S.R.B."/>
            <person name="Meissner R.V."/>
            <person name="Moreira M.A.M."/>
            <person name="Nascimento F.F."/>
            <person name="Nicolas M.F."/>
            <person name="Oliveira J.G."/>
            <person name="Oliveira S.C."/>
            <person name="Paixao R.F.C."/>
            <person name="Parente J.A."/>
            <person name="Pedrosa F.O."/>
            <person name="Pena S.D.J."/>
            <person name="Pereira J.O."/>
            <person name="Pereira M."/>
            <person name="Pinto L.S.R.C."/>
            <person name="Pinto L.S."/>
            <person name="Porto J.I.R."/>
            <person name="Potrich D.P."/>
            <person name="Ramalho-Neto C.E."/>
            <person name="Reis A.M.M."/>
            <person name="Rigo L.U."/>
            <person name="Rondinelli E."/>
            <person name="Santos E.B.P."/>
            <person name="Santos F.R."/>
            <person name="Schneider M.P.C."/>
            <person name="Seuanez H.N."/>
            <person name="Silva A.M.R."/>
            <person name="da Silva A.L.C."/>
            <person name="Silva D.W."/>
            <person name="Silva R."/>
            <person name="Simoes I.C."/>
            <person name="Simon D."/>
            <person name="Soares C.M.A."/>
            <person name="Soares R.B.A."/>
            <person name="Souza E.M."/>
            <person name="Souza K.R.L."/>
            <person name="Souza R.C."/>
            <person name="Steffens M.B.R."/>
            <person name="Steindel M."/>
            <person name="Teixeira S.R."/>
            <person name="Urmenyi T."/>
            <person name="Vettore A."/>
            <person name="Wassem R."/>
            <person name="Zaha A."/>
            <person name="Simpson A.J.G."/>
        </authorList>
    </citation>
    <scope>NUCLEOTIDE SEQUENCE [LARGE SCALE GENOMIC DNA]</scope>
    <source>
        <strain>ATCC 12472 / DSM 30191 / JCM 1249 / CCUG 213 / NBRC 12614 / NCIMB 9131 / NCTC 9757 / MK</strain>
    </source>
</reference>
<proteinExistence type="inferred from homology"/>
<keyword id="KW-0119">Carbohydrate metabolism</keyword>
<keyword id="KW-0963">Cytoplasm</keyword>
<keyword id="KW-0413">Isomerase</keyword>
<keyword id="KW-1185">Reference proteome</keyword>
<comment type="function">
    <text evidence="1">Catalyzes the interconversion of beta-pyran and beta-furan forms of D-ribose.</text>
</comment>
<comment type="catalytic activity">
    <reaction evidence="1">
        <text>beta-D-ribopyranose = beta-D-ribofuranose</text>
        <dbReference type="Rhea" id="RHEA:25432"/>
        <dbReference type="ChEBI" id="CHEBI:27476"/>
        <dbReference type="ChEBI" id="CHEBI:47002"/>
        <dbReference type="EC" id="5.4.99.62"/>
    </reaction>
</comment>
<comment type="pathway">
    <text evidence="1">Carbohydrate metabolism; D-ribose degradation; D-ribose 5-phosphate from beta-D-ribopyranose: step 1/2.</text>
</comment>
<comment type="subunit">
    <text evidence="1">Homodecamer.</text>
</comment>
<comment type="subcellular location">
    <subcellularLocation>
        <location evidence="1">Cytoplasm</location>
    </subcellularLocation>
</comment>
<comment type="similarity">
    <text evidence="1">Belongs to the RbsD / FucU family. RbsD subfamily.</text>
</comment>
<name>RBSD_CHRVO</name>
<organism>
    <name type="scientific">Chromobacterium violaceum (strain ATCC 12472 / DSM 30191 / JCM 1249 / CCUG 213 / NBRC 12614 / NCIMB 9131 / NCTC 9757 / MK)</name>
    <dbReference type="NCBI Taxonomy" id="243365"/>
    <lineage>
        <taxon>Bacteria</taxon>
        <taxon>Pseudomonadati</taxon>
        <taxon>Pseudomonadota</taxon>
        <taxon>Betaproteobacteria</taxon>
        <taxon>Neisseriales</taxon>
        <taxon>Chromobacteriaceae</taxon>
        <taxon>Chromobacterium</taxon>
    </lineage>
</organism>
<sequence length="132" mass="14412">MKKHGHLNRDIARILASMGHTDSLVIADCGLPIPPGVECVDLSLKLGQPGFIETLDSILADFQCERAVFAIECRQHNPAVQDKAERMAQAGAALDFVSHEEFKQRCQAARAVIRTGECTPYANVILHSGVIF</sequence>
<dbReference type="EC" id="5.4.99.62" evidence="1"/>
<dbReference type="EMBL" id="AE016825">
    <property type="protein sequence ID" value="AAQ60688.1"/>
    <property type="molecule type" value="Genomic_DNA"/>
</dbReference>
<dbReference type="RefSeq" id="WP_011136566.1">
    <property type="nucleotide sequence ID" value="NC_005085.1"/>
</dbReference>
<dbReference type="SMR" id="Q7NTN5"/>
<dbReference type="STRING" id="243365.CV_3019"/>
<dbReference type="KEGG" id="cvi:CV_3019"/>
<dbReference type="eggNOG" id="COG1869">
    <property type="taxonomic scope" value="Bacteria"/>
</dbReference>
<dbReference type="HOGENOM" id="CLU_135498_0_0_4"/>
<dbReference type="OrthoDB" id="9805009at2"/>
<dbReference type="UniPathway" id="UPA00916">
    <property type="reaction ID" value="UER00888"/>
</dbReference>
<dbReference type="Proteomes" id="UP000001424">
    <property type="component" value="Chromosome"/>
</dbReference>
<dbReference type="GO" id="GO:0005829">
    <property type="term" value="C:cytosol"/>
    <property type="evidence" value="ECO:0007669"/>
    <property type="project" value="TreeGrafter"/>
</dbReference>
<dbReference type="GO" id="GO:0062193">
    <property type="term" value="F:D-ribose pyranase activity"/>
    <property type="evidence" value="ECO:0007669"/>
    <property type="project" value="UniProtKB-EC"/>
</dbReference>
<dbReference type="GO" id="GO:0016872">
    <property type="term" value="F:intramolecular lyase activity"/>
    <property type="evidence" value="ECO:0007669"/>
    <property type="project" value="UniProtKB-UniRule"/>
</dbReference>
<dbReference type="GO" id="GO:0048029">
    <property type="term" value="F:monosaccharide binding"/>
    <property type="evidence" value="ECO:0007669"/>
    <property type="project" value="InterPro"/>
</dbReference>
<dbReference type="GO" id="GO:0019303">
    <property type="term" value="P:D-ribose catabolic process"/>
    <property type="evidence" value="ECO:0007669"/>
    <property type="project" value="UniProtKB-UniRule"/>
</dbReference>
<dbReference type="Gene3D" id="3.40.1650.10">
    <property type="entry name" value="RbsD-like domain"/>
    <property type="match status" value="1"/>
</dbReference>
<dbReference type="HAMAP" id="MF_01661">
    <property type="entry name" value="D_rib_pyranase"/>
    <property type="match status" value="1"/>
</dbReference>
<dbReference type="InterPro" id="IPR023064">
    <property type="entry name" value="D-ribose_pyranase"/>
</dbReference>
<dbReference type="InterPro" id="IPR023750">
    <property type="entry name" value="RbsD-like_sf"/>
</dbReference>
<dbReference type="InterPro" id="IPR007721">
    <property type="entry name" value="RbsD_FucU"/>
</dbReference>
<dbReference type="NCBIfam" id="NF008761">
    <property type="entry name" value="PRK11797.1"/>
    <property type="match status" value="1"/>
</dbReference>
<dbReference type="PANTHER" id="PTHR37831">
    <property type="entry name" value="D-RIBOSE PYRANASE"/>
    <property type="match status" value="1"/>
</dbReference>
<dbReference type="PANTHER" id="PTHR37831:SF1">
    <property type="entry name" value="D-RIBOSE PYRANASE"/>
    <property type="match status" value="1"/>
</dbReference>
<dbReference type="Pfam" id="PF05025">
    <property type="entry name" value="RbsD_FucU"/>
    <property type="match status" value="1"/>
</dbReference>
<dbReference type="SUPFAM" id="SSF102546">
    <property type="entry name" value="RbsD-like"/>
    <property type="match status" value="1"/>
</dbReference>
<protein>
    <recommendedName>
        <fullName evidence="1">D-ribose pyranase</fullName>
        <ecNumber evidence="1">5.4.99.62</ecNumber>
    </recommendedName>
</protein>